<sequence>MDKFRVQGPTKLQGEVTISGAKNAALPILFAALLAEEPVEIQNVPKLKDVDTSMKLLSQLGAKVERNGSVHIDARDVNVFCAPYDLVKTMRASIWALGPLVARFGQGQVSLPGGCTIGARPVDLHISGLEQLGATIKLEEGYVKASVDGRLKGAHIVMDKVSVGATVTIMCAATLAEGTTIIENAAREPEIVDTANFLITLGAKISGQGTDRIVIEGVERLGGGVYRVLPDRIETGTFLVAAAISRGKIICRNAQPDTLDAVLAKLRDAGADIEVGEDWISLDMHGKRPKAVNVRTAPHPAFPTDMQAQFTLLNLVAEGTGFITETVFENRFMHVPELSRMGAHAEIESNTVICHGVEKLSGAQVMATDLRASASLVLAGCIAEGTTVVDRIYHIDRGYERIEDKLRALGANIERVKGE</sequence>
<evidence type="ECO:0000255" key="1">
    <source>
        <dbReference type="HAMAP-Rule" id="MF_00111"/>
    </source>
</evidence>
<reference key="1">
    <citation type="journal article" date="2009" name="PLoS Genet.">
        <title>Organised genome dynamics in the Escherichia coli species results in highly diverse adaptive paths.</title>
        <authorList>
            <person name="Touchon M."/>
            <person name="Hoede C."/>
            <person name="Tenaillon O."/>
            <person name="Barbe V."/>
            <person name="Baeriswyl S."/>
            <person name="Bidet P."/>
            <person name="Bingen E."/>
            <person name="Bonacorsi S."/>
            <person name="Bouchier C."/>
            <person name="Bouvet O."/>
            <person name="Calteau A."/>
            <person name="Chiapello H."/>
            <person name="Clermont O."/>
            <person name="Cruveiller S."/>
            <person name="Danchin A."/>
            <person name="Diard M."/>
            <person name="Dossat C."/>
            <person name="Karoui M.E."/>
            <person name="Frapy E."/>
            <person name="Garry L."/>
            <person name="Ghigo J.M."/>
            <person name="Gilles A.M."/>
            <person name="Johnson J."/>
            <person name="Le Bouguenec C."/>
            <person name="Lescat M."/>
            <person name="Mangenot S."/>
            <person name="Martinez-Jehanne V."/>
            <person name="Matic I."/>
            <person name="Nassif X."/>
            <person name="Oztas S."/>
            <person name="Petit M.A."/>
            <person name="Pichon C."/>
            <person name="Rouy Z."/>
            <person name="Ruf C.S."/>
            <person name="Schneider D."/>
            <person name="Tourret J."/>
            <person name="Vacherie B."/>
            <person name="Vallenet D."/>
            <person name="Medigue C."/>
            <person name="Rocha E.P.C."/>
            <person name="Denamur E."/>
        </authorList>
    </citation>
    <scope>NUCLEOTIDE SEQUENCE [LARGE SCALE GENOMIC DNA]</scope>
    <source>
        <strain>55989 / EAEC</strain>
    </source>
</reference>
<protein>
    <recommendedName>
        <fullName evidence="1">UDP-N-acetylglucosamine 1-carboxyvinyltransferase</fullName>
        <ecNumber evidence="1">2.5.1.7</ecNumber>
    </recommendedName>
    <alternativeName>
        <fullName evidence="1">Enoylpyruvate transferase</fullName>
    </alternativeName>
    <alternativeName>
        <fullName evidence="1">UDP-N-acetylglucosamine enolpyruvyl transferase</fullName>
        <shortName evidence="1">EPT</shortName>
    </alternativeName>
</protein>
<name>MURA_ECO55</name>
<keyword id="KW-0131">Cell cycle</keyword>
<keyword id="KW-0132">Cell division</keyword>
<keyword id="KW-0133">Cell shape</keyword>
<keyword id="KW-0961">Cell wall biogenesis/degradation</keyword>
<keyword id="KW-0963">Cytoplasm</keyword>
<keyword id="KW-0573">Peptidoglycan synthesis</keyword>
<keyword id="KW-0670">Pyruvate</keyword>
<keyword id="KW-1185">Reference proteome</keyword>
<keyword id="KW-0808">Transferase</keyword>
<dbReference type="EC" id="2.5.1.7" evidence="1"/>
<dbReference type="EMBL" id="CU928145">
    <property type="protein sequence ID" value="CAU99831.1"/>
    <property type="molecule type" value="Genomic_DNA"/>
</dbReference>
<dbReference type="RefSeq" id="WP_000357259.1">
    <property type="nucleotide sequence ID" value="NZ_CP028304.1"/>
</dbReference>
<dbReference type="SMR" id="B7LHP8"/>
<dbReference type="GeneID" id="93778792"/>
<dbReference type="KEGG" id="eck:EC55989_3607"/>
<dbReference type="HOGENOM" id="CLU_027387_0_0_6"/>
<dbReference type="UniPathway" id="UPA00219"/>
<dbReference type="Proteomes" id="UP000000746">
    <property type="component" value="Chromosome"/>
</dbReference>
<dbReference type="GO" id="GO:0005737">
    <property type="term" value="C:cytoplasm"/>
    <property type="evidence" value="ECO:0007669"/>
    <property type="project" value="UniProtKB-SubCell"/>
</dbReference>
<dbReference type="GO" id="GO:0008760">
    <property type="term" value="F:UDP-N-acetylglucosamine 1-carboxyvinyltransferase activity"/>
    <property type="evidence" value="ECO:0007669"/>
    <property type="project" value="UniProtKB-UniRule"/>
</dbReference>
<dbReference type="GO" id="GO:0051301">
    <property type="term" value="P:cell division"/>
    <property type="evidence" value="ECO:0007669"/>
    <property type="project" value="UniProtKB-KW"/>
</dbReference>
<dbReference type="GO" id="GO:0071555">
    <property type="term" value="P:cell wall organization"/>
    <property type="evidence" value="ECO:0007669"/>
    <property type="project" value="UniProtKB-KW"/>
</dbReference>
<dbReference type="GO" id="GO:0009252">
    <property type="term" value="P:peptidoglycan biosynthetic process"/>
    <property type="evidence" value="ECO:0007669"/>
    <property type="project" value="UniProtKB-UniRule"/>
</dbReference>
<dbReference type="GO" id="GO:0008360">
    <property type="term" value="P:regulation of cell shape"/>
    <property type="evidence" value="ECO:0007669"/>
    <property type="project" value="UniProtKB-KW"/>
</dbReference>
<dbReference type="GO" id="GO:0019277">
    <property type="term" value="P:UDP-N-acetylgalactosamine biosynthetic process"/>
    <property type="evidence" value="ECO:0007669"/>
    <property type="project" value="InterPro"/>
</dbReference>
<dbReference type="CDD" id="cd01555">
    <property type="entry name" value="UdpNAET"/>
    <property type="match status" value="1"/>
</dbReference>
<dbReference type="FunFam" id="3.65.10.10:FF:000002">
    <property type="entry name" value="UDP-N-acetylglucosamine 1-carboxyvinyltransferase"/>
    <property type="match status" value="1"/>
</dbReference>
<dbReference type="Gene3D" id="3.65.10.10">
    <property type="entry name" value="Enolpyruvate transferase domain"/>
    <property type="match status" value="2"/>
</dbReference>
<dbReference type="HAMAP" id="MF_00111">
    <property type="entry name" value="MurA"/>
    <property type="match status" value="1"/>
</dbReference>
<dbReference type="InterPro" id="IPR001986">
    <property type="entry name" value="Enolpyruvate_Tfrase_dom"/>
</dbReference>
<dbReference type="InterPro" id="IPR036968">
    <property type="entry name" value="Enolpyruvate_Tfrase_sf"/>
</dbReference>
<dbReference type="InterPro" id="IPR050068">
    <property type="entry name" value="MurA_subfamily"/>
</dbReference>
<dbReference type="InterPro" id="IPR013792">
    <property type="entry name" value="RNA3'P_cycl/enolpyr_Trfase_a/b"/>
</dbReference>
<dbReference type="InterPro" id="IPR005750">
    <property type="entry name" value="UDP_GlcNAc_COvinyl_MurA"/>
</dbReference>
<dbReference type="NCBIfam" id="TIGR01072">
    <property type="entry name" value="murA"/>
    <property type="match status" value="1"/>
</dbReference>
<dbReference type="NCBIfam" id="NF006873">
    <property type="entry name" value="PRK09369.1"/>
    <property type="match status" value="1"/>
</dbReference>
<dbReference type="PANTHER" id="PTHR43783">
    <property type="entry name" value="UDP-N-ACETYLGLUCOSAMINE 1-CARBOXYVINYLTRANSFERASE"/>
    <property type="match status" value="1"/>
</dbReference>
<dbReference type="PANTHER" id="PTHR43783:SF1">
    <property type="entry name" value="UDP-N-ACETYLGLUCOSAMINE 1-CARBOXYVINYLTRANSFERASE"/>
    <property type="match status" value="1"/>
</dbReference>
<dbReference type="Pfam" id="PF00275">
    <property type="entry name" value="EPSP_synthase"/>
    <property type="match status" value="1"/>
</dbReference>
<dbReference type="SUPFAM" id="SSF55205">
    <property type="entry name" value="EPT/RTPC-like"/>
    <property type="match status" value="1"/>
</dbReference>
<gene>
    <name evidence="1" type="primary">murA</name>
    <name type="ordered locus">EC55989_3607</name>
</gene>
<feature type="chain" id="PRO_1000192082" description="UDP-N-acetylglucosamine 1-carboxyvinyltransferase">
    <location>
        <begin position="1"/>
        <end position="419"/>
    </location>
</feature>
<feature type="active site" description="Proton donor" evidence="1">
    <location>
        <position position="115"/>
    </location>
</feature>
<feature type="binding site" evidence="1">
    <location>
        <begin position="22"/>
        <end position="23"/>
    </location>
    <ligand>
        <name>phosphoenolpyruvate</name>
        <dbReference type="ChEBI" id="CHEBI:58702"/>
    </ligand>
</feature>
<feature type="binding site" evidence="1">
    <location>
        <position position="91"/>
    </location>
    <ligand>
        <name>UDP-N-acetyl-alpha-D-glucosamine</name>
        <dbReference type="ChEBI" id="CHEBI:57705"/>
    </ligand>
</feature>
<feature type="binding site" evidence="1">
    <location>
        <begin position="120"/>
        <end position="124"/>
    </location>
    <ligand>
        <name>UDP-N-acetyl-alpha-D-glucosamine</name>
        <dbReference type="ChEBI" id="CHEBI:57705"/>
    </ligand>
</feature>
<feature type="binding site" evidence="1">
    <location>
        <begin position="160"/>
        <end position="163"/>
    </location>
    <ligand>
        <name>UDP-N-acetyl-alpha-D-glucosamine</name>
        <dbReference type="ChEBI" id="CHEBI:57705"/>
    </ligand>
</feature>
<feature type="binding site" evidence="1">
    <location>
        <position position="305"/>
    </location>
    <ligand>
        <name>UDP-N-acetyl-alpha-D-glucosamine</name>
        <dbReference type="ChEBI" id="CHEBI:57705"/>
    </ligand>
</feature>
<feature type="binding site" evidence="1">
    <location>
        <position position="327"/>
    </location>
    <ligand>
        <name>UDP-N-acetyl-alpha-D-glucosamine</name>
        <dbReference type="ChEBI" id="CHEBI:57705"/>
    </ligand>
</feature>
<feature type="modified residue" description="2-(S-cysteinyl)pyruvic acid O-phosphothioketal" evidence="1">
    <location>
        <position position="115"/>
    </location>
</feature>
<proteinExistence type="inferred from homology"/>
<comment type="function">
    <text evidence="1">Cell wall formation. Adds enolpyruvyl to UDP-N-acetylglucosamine.</text>
</comment>
<comment type="catalytic activity">
    <reaction evidence="1">
        <text>phosphoenolpyruvate + UDP-N-acetyl-alpha-D-glucosamine = UDP-N-acetyl-3-O-(1-carboxyvinyl)-alpha-D-glucosamine + phosphate</text>
        <dbReference type="Rhea" id="RHEA:18681"/>
        <dbReference type="ChEBI" id="CHEBI:43474"/>
        <dbReference type="ChEBI" id="CHEBI:57705"/>
        <dbReference type="ChEBI" id="CHEBI:58702"/>
        <dbReference type="ChEBI" id="CHEBI:68483"/>
        <dbReference type="EC" id="2.5.1.7"/>
    </reaction>
</comment>
<comment type="pathway">
    <text evidence="1">Cell wall biogenesis; peptidoglycan biosynthesis.</text>
</comment>
<comment type="subcellular location">
    <subcellularLocation>
        <location evidence="1">Cytoplasm</location>
    </subcellularLocation>
</comment>
<comment type="similarity">
    <text evidence="1">Belongs to the EPSP synthase family. MurA subfamily.</text>
</comment>
<organism>
    <name type="scientific">Escherichia coli (strain 55989 / EAEC)</name>
    <dbReference type="NCBI Taxonomy" id="585055"/>
    <lineage>
        <taxon>Bacteria</taxon>
        <taxon>Pseudomonadati</taxon>
        <taxon>Pseudomonadota</taxon>
        <taxon>Gammaproteobacteria</taxon>
        <taxon>Enterobacterales</taxon>
        <taxon>Enterobacteriaceae</taxon>
        <taxon>Escherichia</taxon>
    </lineage>
</organism>
<accession>B7LHP8</accession>